<evidence type="ECO:0000250" key="1"/>
<evidence type="ECO:0000250" key="2">
    <source>
        <dbReference type="UniProtKB" id="P97352"/>
    </source>
</evidence>
<evidence type="ECO:0000250" key="3">
    <source>
        <dbReference type="UniProtKB" id="Q99584"/>
    </source>
</evidence>
<evidence type="ECO:0000305" key="4"/>
<accession>P79342</accession>
<accession>Q3ZBJ2</accession>
<proteinExistence type="inferred from homology"/>
<comment type="function">
    <text evidence="1">Plays a role in the export of proteins that lack a signal peptide and are secreted by an alternative pathway. Binds two calcium ions per subunit. Binds one copper ion. Binding of one copper ion does not interfere with calcium binding. Required for the copper-dependent stress-induced export of IL1A and FGF1. The calcium-free protein binds to lipid vesicles containing phosphatidylserine, but not to vesicles containing phosphatidylcholine (By similarity).</text>
</comment>
<comment type="subunit">
    <text evidence="2 3">Homodimer. Part of a copper-dependent multiprotein complex containing S100A13, FGF1 and SYT1. Interacts with FGF1 and SYT1 (By similarity). Interacts with IL1A (By similarity).</text>
</comment>
<comment type="subcellular location">
    <subcellularLocation>
        <location evidence="1">Cytoplasm</location>
    </subcellularLocation>
    <subcellularLocation>
        <location evidence="1">Secreted</location>
    </subcellularLocation>
    <text evidence="1">Secretion is mediated by exposure to stress and requires copper ions.</text>
</comment>
<comment type="similarity">
    <text evidence="4">Belongs to the S-100 family.</text>
</comment>
<gene>
    <name type="primary">S100A13</name>
</gene>
<sequence length="98" mass="11199">MAAEPLTELEAAIETVVTTFFTFAGREGRKGSLSVNEFKELVTQQLPHLLKDVGSLDEKMKSLDVNQDSELKFSEYWRLIGELAKEIRKEKALEIRKK</sequence>
<reference key="1">
    <citation type="submission" date="1997-03" db="EMBL/GenBank/DDBJ databases">
        <title>Molecular cloning of a new 8KDa protein, isolated with Amlexanox coupled column chromatography.</title>
        <authorList>
            <person name="Oyama Y."/>
            <person name="Shishibori T."/>
            <person name="Matsutomo M."/>
            <person name="Yamashita K."/>
            <person name="Maeta H."/>
            <person name="Kobayashi R."/>
        </authorList>
    </citation>
    <scope>NUCLEOTIDE SEQUENCE [MRNA]</scope>
</reference>
<reference key="2">
    <citation type="submission" date="2005-08" db="EMBL/GenBank/DDBJ databases">
        <authorList>
            <consortium name="NIH - Mammalian Gene Collection (MGC) project"/>
        </authorList>
    </citation>
    <scope>NUCLEOTIDE SEQUENCE [LARGE SCALE MRNA]</scope>
    <source>
        <strain>Hereford</strain>
        <tissue>Heart ventricle</tissue>
    </source>
</reference>
<name>S10AD_BOVIN</name>
<feature type="chain" id="PRO_0000144018" description="Protein S100-A13">
    <location>
        <begin position="1"/>
        <end position="98"/>
    </location>
</feature>
<feature type="domain" description="EF-hand">
    <location>
        <begin position="18"/>
        <end position="53"/>
    </location>
</feature>
<feature type="binding site" evidence="1">
    <location>
        <position position="32"/>
    </location>
    <ligand>
        <name>Ca(2+)</name>
        <dbReference type="ChEBI" id="CHEBI:29108"/>
        <label>1</label>
    </ligand>
</feature>
<feature type="binding site" evidence="1">
    <location>
        <position position="37"/>
    </location>
    <ligand>
        <name>Ca(2+)</name>
        <dbReference type="ChEBI" id="CHEBI:29108"/>
        <label>1</label>
    </ligand>
</feature>
<feature type="binding site" evidence="1">
    <location>
        <position position="64"/>
    </location>
    <ligand>
        <name>Ca(2+)</name>
        <dbReference type="ChEBI" id="CHEBI:29108"/>
        <label>2</label>
    </ligand>
</feature>
<feature type="binding site" evidence="1">
    <location>
        <position position="66"/>
    </location>
    <ligand>
        <name>Ca(2+)</name>
        <dbReference type="ChEBI" id="CHEBI:29108"/>
        <label>2</label>
    </ligand>
</feature>
<feature type="binding site" evidence="1">
    <location>
        <position position="68"/>
    </location>
    <ligand>
        <name>Ca(2+)</name>
        <dbReference type="ChEBI" id="CHEBI:29108"/>
        <label>2</label>
    </ligand>
</feature>
<feature type="binding site" evidence="1">
    <location>
        <position position="70"/>
    </location>
    <ligand>
        <name>Ca(2+)</name>
        <dbReference type="ChEBI" id="CHEBI:29108"/>
        <label>2</label>
    </ligand>
</feature>
<feature type="binding site" evidence="1">
    <location>
        <position position="75"/>
    </location>
    <ligand>
        <name>Ca(2+)</name>
        <dbReference type="ChEBI" id="CHEBI:29108"/>
        <label>2</label>
    </ligand>
</feature>
<feature type="modified residue" description="Phosphoserine" evidence="2">
    <location>
        <position position="32"/>
    </location>
</feature>
<feature type="sequence conflict" description="In Ref. 1; BAA19411." evidence="4" ref="1">
    <original>L</original>
    <variation>F</variation>
    <location>
        <position position="63"/>
    </location>
</feature>
<protein>
    <recommendedName>
        <fullName>Protein S100-A13</fullName>
    </recommendedName>
    <alternativeName>
        <fullName>8 kDa amlexanox-binding protein</fullName>
    </alternativeName>
    <alternativeName>
        <fullName>S100 calcium-binding protein A13</fullName>
    </alternativeName>
</protein>
<keyword id="KW-0106">Calcium</keyword>
<keyword id="KW-0186">Copper</keyword>
<keyword id="KW-0963">Cytoplasm</keyword>
<keyword id="KW-0446">Lipid-binding</keyword>
<keyword id="KW-0479">Metal-binding</keyword>
<keyword id="KW-0597">Phosphoprotein</keyword>
<keyword id="KW-0653">Protein transport</keyword>
<keyword id="KW-1185">Reference proteome</keyword>
<keyword id="KW-0677">Repeat</keyword>
<keyword id="KW-0964">Secreted</keyword>
<keyword id="KW-0813">Transport</keyword>
<dbReference type="EMBL" id="AB001567">
    <property type="protein sequence ID" value="BAA19411.1"/>
    <property type="molecule type" value="mRNA"/>
</dbReference>
<dbReference type="EMBL" id="BC103266">
    <property type="protein sequence ID" value="AAI03267.1"/>
    <property type="molecule type" value="mRNA"/>
</dbReference>
<dbReference type="RefSeq" id="NP_991369.1">
    <property type="nucleotide sequence ID" value="NM_205800.1"/>
</dbReference>
<dbReference type="RefSeq" id="XP_005203680.1">
    <property type="nucleotide sequence ID" value="XM_005203623.1"/>
</dbReference>
<dbReference type="RefSeq" id="XP_005203681.1">
    <property type="nucleotide sequence ID" value="XM_005203624.5"/>
</dbReference>
<dbReference type="SMR" id="P79342"/>
<dbReference type="FunCoup" id="P79342">
    <property type="interactions" value="147"/>
</dbReference>
<dbReference type="STRING" id="9913.ENSBTAP00000058627"/>
<dbReference type="PaxDb" id="9913-ENSBTAP00000028499"/>
<dbReference type="GeneID" id="404146"/>
<dbReference type="KEGG" id="bta:404146"/>
<dbReference type="CTD" id="6284"/>
<dbReference type="VEuPathDB" id="HostDB:ENSBTAG00000021378"/>
<dbReference type="eggNOG" id="ENOG502S3RT">
    <property type="taxonomic scope" value="Eukaryota"/>
</dbReference>
<dbReference type="HOGENOM" id="CLU_138624_3_0_1"/>
<dbReference type="InParanoid" id="P79342"/>
<dbReference type="OrthoDB" id="8442111at2759"/>
<dbReference type="TreeFam" id="TF332727"/>
<dbReference type="Proteomes" id="UP000009136">
    <property type="component" value="Chromosome 3"/>
</dbReference>
<dbReference type="Bgee" id="ENSBTAG00000021378">
    <property type="expression patterns" value="Expressed in pons and 106 other cell types or tissues"/>
</dbReference>
<dbReference type="GO" id="GO:0005829">
    <property type="term" value="C:cytosol"/>
    <property type="evidence" value="ECO:0000250"/>
    <property type="project" value="UniProtKB"/>
</dbReference>
<dbReference type="GO" id="GO:0005615">
    <property type="term" value="C:extracellular space"/>
    <property type="evidence" value="ECO:0000250"/>
    <property type="project" value="UniProtKB"/>
</dbReference>
<dbReference type="GO" id="GO:0005730">
    <property type="term" value="C:nucleolus"/>
    <property type="evidence" value="ECO:0007669"/>
    <property type="project" value="Ensembl"/>
</dbReference>
<dbReference type="GO" id="GO:0005654">
    <property type="term" value="C:nucleoplasm"/>
    <property type="evidence" value="ECO:0007669"/>
    <property type="project" value="Ensembl"/>
</dbReference>
<dbReference type="GO" id="GO:0048471">
    <property type="term" value="C:perinuclear region of cytoplasm"/>
    <property type="evidence" value="ECO:0000318"/>
    <property type="project" value="GO_Central"/>
</dbReference>
<dbReference type="GO" id="GO:0005886">
    <property type="term" value="C:plasma membrane"/>
    <property type="evidence" value="ECO:0007669"/>
    <property type="project" value="Ensembl"/>
</dbReference>
<dbReference type="GO" id="GO:0005509">
    <property type="term" value="F:calcium ion binding"/>
    <property type="evidence" value="ECO:0000250"/>
    <property type="project" value="UniProtKB"/>
</dbReference>
<dbReference type="GO" id="GO:0048306">
    <property type="term" value="F:calcium-dependent protein binding"/>
    <property type="evidence" value="ECO:0000318"/>
    <property type="project" value="GO_Central"/>
</dbReference>
<dbReference type="GO" id="GO:0005507">
    <property type="term" value="F:copper ion binding"/>
    <property type="evidence" value="ECO:0000250"/>
    <property type="project" value="UniProtKB"/>
</dbReference>
<dbReference type="GO" id="GO:0017134">
    <property type="term" value="F:fibroblast growth factor binding"/>
    <property type="evidence" value="ECO:0007669"/>
    <property type="project" value="Ensembl"/>
</dbReference>
<dbReference type="GO" id="GO:0008289">
    <property type="term" value="F:lipid binding"/>
    <property type="evidence" value="ECO:0007669"/>
    <property type="project" value="UniProtKB-KW"/>
</dbReference>
<dbReference type="GO" id="GO:0042803">
    <property type="term" value="F:protein homodimerization activity"/>
    <property type="evidence" value="ECO:0007669"/>
    <property type="project" value="Ensembl"/>
</dbReference>
<dbReference type="GO" id="GO:0050786">
    <property type="term" value="F:RAGE receptor binding"/>
    <property type="evidence" value="ECO:0000318"/>
    <property type="project" value="GO_Central"/>
</dbReference>
<dbReference type="GO" id="GO:0008270">
    <property type="term" value="F:zinc ion binding"/>
    <property type="evidence" value="ECO:0007669"/>
    <property type="project" value="Ensembl"/>
</dbReference>
<dbReference type="GO" id="GO:0043303">
    <property type="term" value="P:mast cell degranulation"/>
    <property type="evidence" value="ECO:0000314"/>
    <property type="project" value="UniProtKB"/>
</dbReference>
<dbReference type="GO" id="GO:0043123">
    <property type="term" value="P:positive regulation of canonical NF-kappaB signal transduction"/>
    <property type="evidence" value="ECO:0000318"/>
    <property type="project" value="GO_Central"/>
</dbReference>
<dbReference type="GO" id="GO:0001819">
    <property type="term" value="P:positive regulation of cytokine production"/>
    <property type="evidence" value="ECO:0000250"/>
    <property type="project" value="UniProtKB"/>
</dbReference>
<dbReference type="GO" id="GO:0032730">
    <property type="term" value="P:positive regulation of interleukin-1 alpha production"/>
    <property type="evidence" value="ECO:0000250"/>
    <property type="project" value="UniProtKB"/>
</dbReference>
<dbReference type="GO" id="GO:0015031">
    <property type="term" value="P:protein transport"/>
    <property type="evidence" value="ECO:0007669"/>
    <property type="project" value="UniProtKB-KW"/>
</dbReference>
<dbReference type="CDD" id="cd05022">
    <property type="entry name" value="S-100A13"/>
    <property type="match status" value="1"/>
</dbReference>
<dbReference type="FunFam" id="1.10.238.10:FF:000260">
    <property type="entry name" value="Protein S100-A13"/>
    <property type="match status" value="1"/>
</dbReference>
<dbReference type="Gene3D" id="1.10.238.10">
    <property type="entry name" value="EF-hand"/>
    <property type="match status" value="1"/>
</dbReference>
<dbReference type="InterPro" id="IPR011992">
    <property type="entry name" value="EF-hand-dom_pair"/>
</dbReference>
<dbReference type="InterPro" id="IPR013787">
    <property type="entry name" value="S100_Ca-bd_sub"/>
</dbReference>
<dbReference type="PANTHER" id="PTHR11639:SF57">
    <property type="entry name" value="PROTEIN S100-A13"/>
    <property type="match status" value="1"/>
</dbReference>
<dbReference type="PANTHER" id="PTHR11639">
    <property type="entry name" value="S100 CALCIUM-BINDING PROTEIN"/>
    <property type="match status" value="1"/>
</dbReference>
<dbReference type="Pfam" id="PF01023">
    <property type="entry name" value="S_100"/>
    <property type="match status" value="1"/>
</dbReference>
<dbReference type="SMART" id="SM01394">
    <property type="entry name" value="S_100"/>
    <property type="match status" value="1"/>
</dbReference>
<dbReference type="SUPFAM" id="SSF47473">
    <property type="entry name" value="EF-hand"/>
    <property type="match status" value="1"/>
</dbReference>
<organism>
    <name type="scientific">Bos taurus</name>
    <name type="common">Bovine</name>
    <dbReference type="NCBI Taxonomy" id="9913"/>
    <lineage>
        <taxon>Eukaryota</taxon>
        <taxon>Metazoa</taxon>
        <taxon>Chordata</taxon>
        <taxon>Craniata</taxon>
        <taxon>Vertebrata</taxon>
        <taxon>Euteleostomi</taxon>
        <taxon>Mammalia</taxon>
        <taxon>Eutheria</taxon>
        <taxon>Laurasiatheria</taxon>
        <taxon>Artiodactyla</taxon>
        <taxon>Ruminantia</taxon>
        <taxon>Pecora</taxon>
        <taxon>Bovidae</taxon>
        <taxon>Bovinae</taxon>
        <taxon>Bos</taxon>
    </lineage>
</organism>